<name>RF1_ALIFM</name>
<proteinExistence type="inferred from homology"/>
<dbReference type="EMBL" id="CP001139">
    <property type="protein sequence ID" value="ACH65450.1"/>
    <property type="molecule type" value="Genomic_DNA"/>
</dbReference>
<dbReference type="RefSeq" id="WP_005418202.1">
    <property type="nucleotide sequence ID" value="NC_011184.1"/>
</dbReference>
<dbReference type="SMR" id="B5FBX0"/>
<dbReference type="GeneID" id="54163435"/>
<dbReference type="KEGG" id="vfm:VFMJ11_0804"/>
<dbReference type="HOGENOM" id="CLU_036856_0_1_6"/>
<dbReference type="Proteomes" id="UP000001857">
    <property type="component" value="Chromosome I"/>
</dbReference>
<dbReference type="GO" id="GO:0005737">
    <property type="term" value="C:cytoplasm"/>
    <property type="evidence" value="ECO:0007669"/>
    <property type="project" value="UniProtKB-SubCell"/>
</dbReference>
<dbReference type="GO" id="GO:0016149">
    <property type="term" value="F:translation release factor activity, codon specific"/>
    <property type="evidence" value="ECO:0007669"/>
    <property type="project" value="UniProtKB-UniRule"/>
</dbReference>
<dbReference type="FunFam" id="3.30.160.20:FF:000004">
    <property type="entry name" value="Peptide chain release factor 1"/>
    <property type="match status" value="1"/>
</dbReference>
<dbReference type="FunFam" id="3.30.70.1660:FF:000002">
    <property type="entry name" value="Peptide chain release factor 1"/>
    <property type="match status" value="1"/>
</dbReference>
<dbReference type="FunFam" id="3.30.70.1660:FF:000004">
    <property type="entry name" value="Peptide chain release factor 1"/>
    <property type="match status" value="1"/>
</dbReference>
<dbReference type="Gene3D" id="3.30.160.20">
    <property type="match status" value="1"/>
</dbReference>
<dbReference type="Gene3D" id="3.30.70.1660">
    <property type="match status" value="1"/>
</dbReference>
<dbReference type="Gene3D" id="6.10.140.1950">
    <property type="match status" value="1"/>
</dbReference>
<dbReference type="HAMAP" id="MF_00093">
    <property type="entry name" value="Rel_fac_1"/>
    <property type="match status" value="1"/>
</dbReference>
<dbReference type="InterPro" id="IPR005139">
    <property type="entry name" value="PCRF"/>
</dbReference>
<dbReference type="InterPro" id="IPR000352">
    <property type="entry name" value="Pep_chain_release_fac_I"/>
</dbReference>
<dbReference type="InterPro" id="IPR045853">
    <property type="entry name" value="Pep_chain_release_fac_I_sf"/>
</dbReference>
<dbReference type="InterPro" id="IPR050057">
    <property type="entry name" value="Prokaryotic/Mito_RF"/>
</dbReference>
<dbReference type="InterPro" id="IPR004373">
    <property type="entry name" value="RF-1"/>
</dbReference>
<dbReference type="NCBIfam" id="TIGR00019">
    <property type="entry name" value="prfA"/>
    <property type="match status" value="1"/>
</dbReference>
<dbReference type="NCBIfam" id="NF001859">
    <property type="entry name" value="PRK00591.1"/>
    <property type="match status" value="1"/>
</dbReference>
<dbReference type="PANTHER" id="PTHR43804">
    <property type="entry name" value="LD18447P"/>
    <property type="match status" value="1"/>
</dbReference>
<dbReference type="PANTHER" id="PTHR43804:SF7">
    <property type="entry name" value="LD18447P"/>
    <property type="match status" value="1"/>
</dbReference>
<dbReference type="Pfam" id="PF03462">
    <property type="entry name" value="PCRF"/>
    <property type="match status" value="1"/>
</dbReference>
<dbReference type="Pfam" id="PF00472">
    <property type="entry name" value="RF-1"/>
    <property type="match status" value="1"/>
</dbReference>
<dbReference type="SMART" id="SM00937">
    <property type="entry name" value="PCRF"/>
    <property type="match status" value="1"/>
</dbReference>
<dbReference type="SUPFAM" id="SSF75620">
    <property type="entry name" value="Release factor"/>
    <property type="match status" value="1"/>
</dbReference>
<dbReference type="PROSITE" id="PS00745">
    <property type="entry name" value="RF_PROK_I"/>
    <property type="match status" value="1"/>
</dbReference>
<comment type="function">
    <text evidence="1">Peptide chain release factor 1 directs the termination of translation in response to the peptide chain termination codons UAG and UAA.</text>
</comment>
<comment type="subcellular location">
    <subcellularLocation>
        <location evidence="1">Cytoplasm</location>
    </subcellularLocation>
</comment>
<comment type="PTM">
    <text evidence="1">Methylated by PrmC. Methylation increases the termination efficiency of RF1.</text>
</comment>
<comment type="similarity">
    <text evidence="1">Belongs to the prokaryotic/mitochondrial release factor family.</text>
</comment>
<sequence length="362" mass="40403">MKASIRVKLETLVERYEEVQHLLGDPDVIGDQNKFRALSREYSQLEEVTQCFQAYEQAQEDLVAAQEMAQEDDEEMREMAQEEIKDAKEAIERLTDELQVLLLPKDPNDERNCFLEIRAGAGGDEAGIFAGNLFRMYSRFAEKKGWRVEVMSSNEAEHGGYKEMIAKVSGEGAYGVLKFESGGHRVQRVPETESQGRVHTSACTVAVMAEIPEADLPEIKAADLKIDTFRASGAGGQHVNTTDSAIRITHLPTGTVVECQDERSQHKNKAKAMSVLAARIIQAEEARRAAAVSDTRRNLLGSGDRSDRIRTYNYPQGRVSDHRINLTVYRLNEVMEGDLGCLIEPVVLEYQADQLAALAEQN</sequence>
<protein>
    <recommendedName>
        <fullName evidence="1">Peptide chain release factor 1</fullName>
        <shortName evidence="1">RF-1</shortName>
    </recommendedName>
</protein>
<reference key="1">
    <citation type="submission" date="2008-08" db="EMBL/GenBank/DDBJ databases">
        <title>Complete sequence of Vibrio fischeri strain MJ11.</title>
        <authorList>
            <person name="Mandel M.J."/>
            <person name="Stabb E.V."/>
            <person name="Ruby E.G."/>
            <person name="Ferriera S."/>
            <person name="Johnson J."/>
            <person name="Kravitz S."/>
            <person name="Beeson K."/>
            <person name="Sutton G."/>
            <person name="Rogers Y.-H."/>
            <person name="Friedman R."/>
            <person name="Frazier M."/>
            <person name="Venter J.C."/>
        </authorList>
    </citation>
    <scope>NUCLEOTIDE SEQUENCE [LARGE SCALE GENOMIC DNA]</scope>
    <source>
        <strain>MJ11</strain>
    </source>
</reference>
<gene>
    <name evidence="1" type="primary">prfA</name>
    <name type="ordered locus">VFMJ11_0804</name>
</gene>
<feature type="chain" id="PRO_1000093522" description="Peptide chain release factor 1">
    <location>
        <begin position="1"/>
        <end position="362"/>
    </location>
</feature>
<feature type="modified residue" description="N5-methylglutamine" evidence="1">
    <location>
        <position position="237"/>
    </location>
</feature>
<keyword id="KW-0963">Cytoplasm</keyword>
<keyword id="KW-0488">Methylation</keyword>
<keyword id="KW-0648">Protein biosynthesis</keyword>
<evidence type="ECO:0000255" key="1">
    <source>
        <dbReference type="HAMAP-Rule" id="MF_00093"/>
    </source>
</evidence>
<accession>B5FBX0</accession>
<organism>
    <name type="scientific">Aliivibrio fischeri (strain MJ11)</name>
    <name type="common">Vibrio fischeri</name>
    <dbReference type="NCBI Taxonomy" id="388396"/>
    <lineage>
        <taxon>Bacteria</taxon>
        <taxon>Pseudomonadati</taxon>
        <taxon>Pseudomonadota</taxon>
        <taxon>Gammaproteobacteria</taxon>
        <taxon>Vibrionales</taxon>
        <taxon>Vibrionaceae</taxon>
        <taxon>Aliivibrio</taxon>
    </lineage>
</organism>